<name>UP06_PINHA</name>
<protein>
    <recommendedName>
        <fullName>Unknown protein 6</fullName>
    </recommendedName>
</protein>
<comment type="subcellular location">
    <subcellularLocation>
        <location evidence="1">Secreted</location>
        <location evidence="1">Cell wall</location>
    </subcellularLocation>
</comment>
<sequence length="10" mass="1363">ARVPFYRYYK</sequence>
<proteinExistence type="evidence at protein level"/>
<feature type="chain" id="PRO_0000326448" description="Unknown protein 6">
    <location>
        <begin position="1" status="less than"/>
        <end position="10" status="greater than"/>
    </location>
</feature>
<feature type="unsure residue" description="K or Q">
    <location>
        <position position="10"/>
    </location>
</feature>
<feature type="non-terminal residue" evidence="2">
    <location>
        <position position="1"/>
    </location>
</feature>
<feature type="non-terminal residue" evidence="2">
    <location>
        <position position="10"/>
    </location>
</feature>
<organism>
    <name type="scientific">Pinus halepensis</name>
    <name type="common">Aleppo pine</name>
    <dbReference type="NCBI Taxonomy" id="71633"/>
    <lineage>
        <taxon>Eukaryota</taxon>
        <taxon>Viridiplantae</taxon>
        <taxon>Streptophyta</taxon>
        <taxon>Embryophyta</taxon>
        <taxon>Tracheophyta</taxon>
        <taxon>Spermatophyta</taxon>
        <taxon>Pinopsida</taxon>
        <taxon>Pinidae</taxon>
        <taxon>Conifers I</taxon>
        <taxon>Pinales</taxon>
        <taxon>Pinaceae</taxon>
        <taxon>Pinus</taxon>
        <taxon>Pinus subgen. Pinus</taxon>
    </lineage>
</organism>
<reference evidence="3" key="1">
    <citation type="journal article" date="2009" name="J. Plant Physiol.">
        <title>Analysis of the soluble cell wall proteome of gymnosperms.</title>
        <authorList>
            <person name="Uzal E.N."/>
            <person name="Gomez-Ros L.V."/>
            <person name="Hernandez J.A."/>
            <person name="Pedreno M.A."/>
            <person name="Cuello J."/>
            <person name="Ros Barcelo A."/>
        </authorList>
    </citation>
    <scope>PROTEIN SEQUENCE</scope>
    <scope>SUBCELLULAR LOCATION</scope>
    <source>
        <strain evidence="1">PC-801</strain>
        <tissue evidence="1">Callus</tissue>
    </source>
</reference>
<dbReference type="GO" id="GO:0005576">
    <property type="term" value="C:extracellular region"/>
    <property type="evidence" value="ECO:0007669"/>
    <property type="project" value="UniProtKB-KW"/>
</dbReference>
<evidence type="ECO:0000269" key="1">
    <source>
    </source>
</evidence>
<evidence type="ECO:0000303" key="2">
    <source>
    </source>
</evidence>
<evidence type="ECO:0000305" key="3"/>
<accession>P85490</accession>
<keyword id="KW-0134">Cell wall</keyword>
<keyword id="KW-0903">Direct protein sequencing</keyword>
<keyword id="KW-0964">Secreted</keyword>